<gene>
    <name evidence="1" type="primary">fmt</name>
    <name type="ordered locus">Arad_0679</name>
</gene>
<keyword id="KW-0648">Protein biosynthesis</keyword>
<keyword id="KW-0808">Transferase</keyword>
<feature type="chain" id="PRO_1000189999" description="Methionyl-tRNA formyltransferase">
    <location>
        <begin position="1"/>
        <end position="315"/>
    </location>
</feature>
<feature type="binding site" evidence="1">
    <location>
        <begin position="112"/>
        <end position="115"/>
    </location>
    <ligand>
        <name>(6S)-5,6,7,8-tetrahydrofolate</name>
        <dbReference type="ChEBI" id="CHEBI:57453"/>
    </ligand>
</feature>
<organism>
    <name type="scientific">Rhizobium rhizogenes (strain K84 / ATCC BAA-868)</name>
    <name type="common">Agrobacterium radiobacter</name>
    <dbReference type="NCBI Taxonomy" id="311403"/>
    <lineage>
        <taxon>Bacteria</taxon>
        <taxon>Pseudomonadati</taxon>
        <taxon>Pseudomonadota</taxon>
        <taxon>Alphaproteobacteria</taxon>
        <taxon>Hyphomicrobiales</taxon>
        <taxon>Rhizobiaceae</taxon>
        <taxon>Rhizobium/Agrobacterium group</taxon>
        <taxon>Rhizobium</taxon>
    </lineage>
</organism>
<name>FMT_RHIR8</name>
<reference key="1">
    <citation type="journal article" date="2009" name="J. Bacteriol.">
        <title>Genome sequences of three Agrobacterium biovars help elucidate the evolution of multichromosome genomes in bacteria.</title>
        <authorList>
            <person name="Slater S.C."/>
            <person name="Goldman B.S."/>
            <person name="Goodner B."/>
            <person name="Setubal J.C."/>
            <person name="Farrand S.K."/>
            <person name="Nester E.W."/>
            <person name="Burr T.J."/>
            <person name="Banta L."/>
            <person name="Dickerman A.W."/>
            <person name="Paulsen I."/>
            <person name="Otten L."/>
            <person name="Suen G."/>
            <person name="Welch R."/>
            <person name="Almeida N.F."/>
            <person name="Arnold F."/>
            <person name="Burton O.T."/>
            <person name="Du Z."/>
            <person name="Ewing A."/>
            <person name="Godsy E."/>
            <person name="Heisel S."/>
            <person name="Houmiel K.L."/>
            <person name="Jhaveri J."/>
            <person name="Lu J."/>
            <person name="Miller N.M."/>
            <person name="Norton S."/>
            <person name="Chen Q."/>
            <person name="Phoolcharoen W."/>
            <person name="Ohlin V."/>
            <person name="Ondrusek D."/>
            <person name="Pride N."/>
            <person name="Stricklin S.L."/>
            <person name="Sun J."/>
            <person name="Wheeler C."/>
            <person name="Wilson L."/>
            <person name="Zhu H."/>
            <person name="Wood D.W."/>
        </authorList>
    </citation>
    <scope>NUCLEOTIDE SEQUENCE [LARGE SCALE GENOMIC DNA]</scope>
    <source>
        <strain>K84 / ATCC BAA-868</strain>
    </source>
</reference>
<comment type="function">
    <text evidence="1">Attaches a formyl group to the free amino group of methionyl-tRNA(fMet). The formyl group appears to play a dual role in the initiator identity of N-formylmethionyl-tRNA by promoting its recognition by IF2 and preventing the misappropriation of this tRNA by the elongation apparatus.</text>
</comment>
<comment type="catalytic activity">
    <reaction evidence="1">
        <text>L-methionyl-tRNA(fMet) + (6R)-10-formyltetrahydrofolate = N-formyl-L-methionyl-tRNA(fMet) + (6S)-5,6,7,8-tetrahydrofolate + H(+)</text>
        <dbReference type="Rhea" id="RHEA:24380"/>
        <dbReference type="Rhea" id="RHEA-COMP:9952"/>
        <dbReference type="Rhea" id="RHEA-COMP:9953"/>
        <dbReference type="ChEBI" id="CHEBI:15378"/>
        <dbReference type="ChEBI" id="CHEBI:57453"/>
        <dbReference type="ChEBI" id="CHEBI:78530"/>
        <dbReference type="ChEBI" id="CHEBI:78844"/>
        <dbReference type="ChEBI" id="CHEBI:195366"/>
        <dbReference type="EC" id="2.1.2.9"/>
    </reaction>
</comment>
<comment type="similarity">
    <text evidence="1">Belongs to the Fmt family.</text>
</comment>
<sequence>MSLSIIFMGTPEFSVPTLRSLIDAGHKIRAVYTQPPRPGGRRGLDLQKSPVHQAAELLGLPVFTPVNFKDQEERQRFRELDADVAVVVAYGLLLPEAILTGTRLGCYNGHASLLPRWRGAAPIQRAIMAGDKKTGMMVMKMDKGLDTGPVALTREVEIGGTMTAGELHDKLMQAGAKAMAEAMNKLEYNELPLTEQPAEGVVYAAKIDKGETRIDFSKPAADVHNHIRGLSPFPGAWFEMEIAGKPERVKVLGSELAEGERAVGEVLSDDLAIACGSGAVRLTKLQKAGGKPMAAADFLRGTPVAAGTILALGPV</sequence>
<proteinExistence type="inferred from homology"/>
<evidence type="ECO:0000255" key="1">
    <source>
        <dbReference type="HAMAP-Rule" id="MF_00182"/>
    </source>
</evidence>
<protein>
    <recommendedName>
        <fullName evidence="1">Methionyl-tRNA formyltransferase</fullName>
        <ecNumber evidence="1">2.1.2.9</ecNumber>
    </recommendedName>
</protein>
<accession>B9J8C6</accession>
<dbReference type="EC" id="2.1.2.9" evidence="1"/>
<dbReference type="EMBL" id="CP000628">
    <property type="protein sequence ID" value="ACM25313.1"/>
    <property type="molecule type" value="Genomic_DNA"/>
</dbReference>
<dbReference type="RefSeq" id="WP_007695426.1">
    <property type="nucleotide sequence ID" value="NC_011985.1"/>
</dbReference>
<dbReference type="SMR" id="B9J8C6"/>
<dbReference type="STRING" id="311403.Arad_0679"/>
<dbReference type="KEGG" id="ara:Arad_0679"/>
<dbReference type="eggNOG" id="COG0223">
    <property type="taxonomic scope" value="Bacteria"/>
</dbReference>
<dbReference type="HOGENOM" id="CLU_033347_1_2_5"/>
<dbReference type="Proteomes" id="UP000001600">
    <property type="component" value="Chromosome 1"/>
</dbReference>
<dbReference type="GO" id="GO:0005829">
    <property type="term" value="C:cytosol"/>
    <property type="evidence" value="ECO:0007669"/>
    <property type="project" value="TreeGrafter"/>
</dbReference>
<dbReference type="GO" id="GO:0004479">
    <property type="term" value="F:methionyl-tRNA formyltransferase activity"/>
    <property type="evidence" value="ECO:0007669"/>
    <property type="project" value="UniProtKB-UniRule"/>
</dbReference>
<dbReference type="CDD" id="cd08646">
    <property type="entry name" value="FMT_core_Met-tRNA-FMT_N"/>
    <property type="match status" value="1"/>
</dbReference>
<dbReference type="CDD" id="cd08704">
    <property type="entry name" value="Met_tRNA_FMT_C"/>
    <property type="match status" value="1"/>
</dbReference>
<dbReference type="Gene3D" id="3.40.50.12230">
    <property type="match status" value="1"/>
</dbReference>
<dbReference type="HAMAP" id="MF_00182">
    <property type="entry name" value="Formyl_trans"/>
    <property type="match status" value="1"/>
</dbReference>
<dbReference type="InterPro" id="IPR005794">
    <property type="entry name" value="Fmt"/>
</dbReference>
<dbReference type="InterPro" id="IPR005793">
    <property type="entry name" value="Formyl_trans_C"/>
</dbReference>
<dbReference type="InterPro" id="IPR002376">
    <property type="entry name" value="Formyl_transf_N"/>
</dbReference>
<dbReference type="InterPro" id="IPR036477">
    <property type="entry name" value="Formyl_transf_N_sf"/>
</dbReference>
<dbReference type="InterPro" id="IPR011034">
    <property type="entry name" value="Formyl_transferase-like_C_sf"/>
</dbReference>
<dbReference type="InterPro" id="IPR001555">
    <property type="entry name" value="GART_AS"/>
</dbReference>
<dbReference type="InterPro" id="IPR044135">
    <property type="entry name" value="Met-tRNA-FMT_C"/>
</dbReference>
<dbReference type="InterPro" id="IPR041711">
    <property type="entry name" value="Met-tRNA-FMT_N"/>
</dbReference>
<dbReference type="NCBIfam" id="TIGR00460">
    <property type="entry name" value="fmt"/>
    <property type="match status" value="1"/>
</dbReference>
<dbReference type="PANTHER" id="PTHR11138">
    <property type="entry name" value="METHIONYL-TRNA FORMYLTRANSFERASE"/>
    <property type="match status" value="1"/>
</dbReference>
<dbReference type="PANTHER" id="PTHR11138:SF5">
    <property type="entry name" value="METHIONYL-TRNA FORMYLTRANSFERASE, MITOCHONDRIAL"/>
    <property type="match status" value="1"/>
</dbReference>
<dbReference type="Pfam" id="PF02911">
    <property type="entry name" value="Formyl_trans_C"/>
    <property type="match status" value="1"/>
</dbReference>
<dbReference type="Pfam" id="PF00551">
    <property type="entry name" value="Formyl_trans_N"/>
    <property type="match status" value="1"/>
</dbReference>
<dbReference type="SUPFAM" id="SSF50486">
    <property type="entry name" value="FMT C-terminal domain-like"/>
    <property type="match status" value="1"/>
</dbReference>
<dbReference type="SUPFAM" id="SSF53328">
    <property type="entry name" value="Formyltransferase"/>
    <property type="match status" value="1"/>
</dbReference>
<dbReference type="PROSITE" id="PS00373">
    <property type="entry name" value="GART"/>
    <property type="match status" value="1"/>
</dbReference>